<comment type="function">
    <text evidence="1">Probably involved in ribonucleotide reductase function.</text>
</comment>
<comment type="similarity">
    <text evidence="1">Belongs to the NrdI family.</text>
</comment>
<protein>
    <recommendedName>
        <fullName evidence="1">Protein NrdI</fullName>
    </recommendedName>
</protein>
<reference key="1">
    <citation type="submission" date="2006-12" db="EMBL/GenBank/DDBJ databases">
        <title>Complete sequence of chromosome of Mycobacterium sp. KMS.</title>
        <authorList>
            <consortium name="US DOE Joint Genome Institute"/>
            <person name="Copeland A."/>
            <person name="Lucas S."/>
            <person name="Lapidus A."/>
            <person name="Barry K."/>
            <person name="Detter J.C."/>
            <person name="Glavina del Rio T."/>
            <person name="Hammon N."/>
            <person name="Israni S."/>
            <person name="Dalin E."/>
            <person name="Tice H."/>
            <person name="Pitluck S."/>
            <person name="Kiss H."/>
            <person name="Brettin T."/>
            <person name="Bruce D."/>
            <person name="Han C."/>
            <person name="Tapia R."/>
            <person name="Gilna P."/>
            <person name="Schmutz J."/>
            <person name="Larimer F."/>
            <person name="Land M."/>
            <person name="Hauser L."/>
            <person name="Kyrpides N."/>
            <person name="Mikhailova N."/>
            <person name="Miller C.D."/>
            <person name="Richardson P."/>
        </authorList>
    </citation>
    <scope>NUCLEOTIDE SEQUENCE [LARGE SCALE GENOMIC DNA]</scope>
    <source>
        <strain>KMS</strain>
    </source>
</reference>
<proteinExistence type="inferred from homology"/>
<name>NRDI_MYCSK</name>
<dbReference type="EMBL" id="CP000518">
    <property type="protein sequence ID" value="ABL91064.1"/>
    <property type="molecule type" value="Genomic_DNA"/>
</dbReference>
<dbReference type="SMR" id="A1UE06"/>
<dbReference type="STRING" id="189918.Mkms_1863"/>
<dbReference type="KEGG" id="mkm:Mkms_1863"/>
<dbReference type="HOGENOM" id="CLU_114845_0_0_11"/>
<dbReference type="OrthoDB" id="350535at2"/>
<dbReference type="GO" id="GO:0010181">
    <property type="term" value="F:FMN binding"/>
    <property type="evidence" value="ECO:0007669"/>
    <property type="project" value="InterPro"/>
</dbReference>
<dbReference type="GO" id="GO:0036211">
    <property type="term" value="P:protein modification process"/>
    <property type="evidence" value="ECO:0007669"/>
    <property type="project" value="InterPro"/>
</dbReference>
<dbReference type="Gene3D" id="3.40.50.360">
    <property type="match status" value="1"/>
</dbReference>
<dbReference type="HAMAP" id="MF_00128">
    <property type="entry name" value="NrdI"/>
    <property type="match status" value="1"/>
</dbReference>
<dbReference type="InterPro" id="IPR029039">
    <property type="entry name" value="Flavoprotein-like_sf"/>
</dbReference>
<dbReference type="InterPro" id="IPR020852">
    <property type="entry name" value="RNR_Ib_NrdI_bac"/>
</dbReference>
<dbReference type="InterPro" id="IPR004465">
    <property type="entry name" value="RNR_NrdI"/>
</dbReference>
<dbReference type="NCBIfam" id="TIGR00333">
    <property type="entry name" value="nrdI"/>
    <property type="match status" value="1"/>
</dbReference>
<dbReference type="PANTHER" id="PTHR37297">
    <property type="entry name" value="PROTEIN NRDI"/>
    <property type="match status" value="1"/>
</dbReference>
<dbReference type="PANTHER" id="PTHR37297:SF1">
    <property type="entry name" value="PROTEIN NRDI"/>
    <property type="match status" value="1"/>
</dbReference>
<dbReference type="Pfam" id="PF07972">
    <property type="entry name" value="Flavodoxin_NdrI"/>
    <property type="match status" value="1"/>
</dbReference>
<dbReference type="PIRSF" id="PIRSF005087">
    <property type="entry name" value="NrdI"/>
    <property type="match status" value="1"/>
</dbReference>
<dbReference type="SUPFAM" id="SSF52218">
    <property type="entry name" value="Flavoproteins"/>
    <property type="match status" value="1"/>
</dbReference>
<feature type="chain" id="PRO_1000016512" description="Protein NrdI">
    <location>
        <begin position="1"/>
        <end position="152"/>
    </location>
</feature>
<evidence type="ECO:0000255" key="1">
    <source>
        <dbReference type="HAMAP-Rule" id="MF_00128"/>
    </source>
</evidence>
<accession>A1UE06</accession>
<organism>
    <name type="scientific">Mycobacterium sp. (strain KMS)</name>
    <dbReference type="NCBI Taxonomy" id="189918"/>
    <lineage>
        <taxon>Bacteria</taxon>
        <taxon>Bacillati</taxon>
        <taxon>Actinomycetota</taxon>
        <taxon>Actinomycetes</taxon>
        <taxon>Mycobacteriales</taxon>
        <taxon>Mycobacteriaceae</taxon>
        <taxon>Mycobacterium</taxon>
    </lineage>
</organism>
<sequence>MGNIVYFSSVSENTHRFVEKLELPATRIPILGRIQDPDFVREPYVLVLPTYGGGHANGPDPDAGGYVPKQVIAFLNNEHNRSLIRGVIAAGNTNFGAEFGYAGDVVSRKCGVPYLYRFELMGTTDDVLAVRAGLENFWKEQTCHPPSQLQSL</sequence>
<gene>
    <name evidence="1" type="primary">nrdI</name>
    <name type="ordered locus">Mkms_1863</name>
</gene>